<reference key="1">
    <citation type="journal article" date="1992" name="Proc. Natl. Acad. Sci. U.S.A.">
        <title>Ascaris hemoglobin gene: plant-like structure reflects the ancestral globin gene.</title>
        <authorList>
            <person name="Sherman D.R."/>
            <person name="Kloek A.P."/>
            <person name="Krishnan B.R."/>
            <person name="Guinn B."/>
            <person name="Goldberg D.E."/>
        </authorList>
    </citation>
    <scope>NUCLEOTIDE SEQUENCE [MRNA]</scope>
</reference>
<reference key="2">
    <citation type="journal article" date="1992" name="Proc. Natl. Acad. Sci. U.S.A.">
        <title>Polar zipper sequence in the high-affinity hemoglobin of Ascaris suum: amino acid sequence and structural interpretation.</title>
        <authorList>
            <person name="de Baere I."/>
            <person name="Liu L."/>
            <person name="Moens L."/>
            <person name="van Beeumen J."/>
            <person name="Gielens C."/>
            <person name="Richelle J."/>
            <person name="Trotman C."/>
            <person name="Finch J."/>
            <person name="Gerstein M."/>
            <person name="Perutz M."/>
        </authorList>
    </citation>
    <scope>PROTEIN SEQUENCE OF 19-333</scope>
</reference>
<reference key="3">
    <citation type="journal article" date="1995" name="Bioessays">
        <title>The enigmatic oxygen-avid hemoglobin of Ascaris.</title>
        <authorList>
            <person name="Goldberg D.E."/>
        </authorList>
    </citation>
    <scope>REVIEW</scope>
</reference>
<reference key="4">
    <citation type="journal article" date="1995" name="Proc. Natl. Acad. Sci. U.S.A.">
        <title>The structure of Ascaris hemoglobin domain I at 2.2-A resolution: molecular features of oxygen avidity.</title>
        <authorList>
            <person name="Yang J."/>
            <person name="Kloek A.P."/>
            <person name="Goldberg D.E."/>
            <person name="Mathews F.S."/>
        </authorList>
    </citation>
    <scope>X-RAY CRYSTALLOGRAPHY (2.15 ANGSTROMS) OF 19-167</scope>
</reference>
<dbReference type="EMBL" id="L03351">
    <property type="protein sequence ID" value="AAA29374.1"/>
    <property type="molecule type" value="mRNA"/>
</dbReference>
<dbReference type="PIR" id="A47183">
    <property type="entry name" value="A47183"/>
</dbReference>
<dbReference type="PDB" id="1ASH">
    <property type="method" value="X-ray"/>
    <property type="resolution" value="2.15 A"/>
    <property type="chains" value="A=18-167"/>
</dbReference>
<dbReference type="PDBsum" id="1ASH"/>
<dbReference type="SMR" id="P28316"/>
<dbReference type="iPTMnet" id="P28316"/>
<dbReference type="EvolutionaryTrace" id="P28316"/>
<dbReference type="GO" id="GO:0005576">
    <property type="term" value="C:extracellular region"/>
    <property type="evidence" value="ECO:0007669"/>
    <property type="project" value="UniProtKB-SubCell"/>
</dbReference>
<dbReference type="GO" id="GO:0020037">
    <property type="term" value="F:heme binding"/>
    <property type="evidence" value="ECO:0007669"/>
    <property type="project" value="InterPro"/>
</dbReference>
<dbReference type="GO" id="GO:0046872">
    <property type="term" value="F:metal ion binding"/>
    <property type="evidence" value="ECO:0007669"/>
    <property type="project" value="UniProtKB-KW"/>
</dbReference>
<dbReference type="GO" id="GO:0019825">
    <property type="term" value="F:oxygen binding"/>
    <property type="evidence" value="ECO:0007669"/>
    <property type="project" value="InterPro"/>
</dbReference>
<dbReference type="GO" id="GO:0005344">
    <property type="term" value="F:oxygen carrier activity"/>
    <property type="evidence" value="ECO:0007669"/>
    <property type="project" value="UniProtKB-KW"/>
</dbReference>
<dbReference type="CDD" id="cd01040">
    <property type="entry name" value="Mb-like"/>
    <property type="match status" value="2"/>
</dbReference>
<dbReference type="Gene3D" id="1.10.490.10">
    <property type="entry name" value="Globins"/>
    <property type="match status" value="2"/>
</dbReference>
<dbReference type="InterPro" id="IPR000971">
    <property type="entry name" value="Globin"/>
</dbReference>
<dbReference type="InterPro" id="IPR050532">
    <property type="entry name" value="Globin-like_OT"/>
</dbReference>
<dbReference type="InterPro" id="IPR009050">
    <property type="entry name" value="Globin-like_sf"/>
</dbReference>
<dbReference type="InterPro" id="IPR012292">
    <property type="entry name" value="Globin/Proto"/>
</dbReference>
<dbReference type="InterPro" id="IPR044399">
    <property type="entry name" value="Mb-like_M"/>
</dbReference>
<dbReference type="PANTHER" id="PTHR46458">
    <property type="entry name" value="BLR2807 PROTEIN"/>
    <property type="match status" value="1"/>
</dbReference>
<dbReference type="PANTHER" id="PTHR46458:SF1">
    <property type="entry name" value="GEO09476P1"/>
    <property type="match status" value="1"/>
</dbReference>
<dbReference type="Pfam" id="PF00042">
    <property type="entry name" value="Globin"/>
    <property type="match status" value="2"/>
</dbReference>
<dbReference type="SUPFAM" id="SSF46458">
    <property type="entry name" value="Globin-like"/>
    <property type="match status" value="2"/>
</dbReference>
<dbReference type="PROSITE" id="PS01033">
    <property type="entry name" value="GLOBIN"/>
    <property type="match status" value="2"/>
</dbReference>
<feature type="signal peptide" evidence="3">
    <location>
        <begin position="1"/>
        <end position="18"/>
    </location>
</feature>
<feature type="chain" id="PRO_0000011185" description="Extracellular globin">
    <location>
        <begin position="19"/>
        <end position="338"/>
    </location>
</feature>
<feature type="domain" description="Globin 1" evidence="1">
    <location>
        <begin position="25"/>
        <end position="167"/>
    </location>
</feature>
<feature type="domain" description="Globin 2" evidence="1">
    <location>
        <begin position="174"/>
        <end position="316"/>
    </location>
</feature>
<feature type="region of interest" description="Disordered" evidence="2">
    <location>
        <begin position="313"/>
        <end position="338"/>
    </location>
</feature>
<feature type="binding site" description="distal binding residue">
    <location>
        <position position="82"/>
    </location>
    <ligand>
        <name>heme b</name>
        <dbReference type="ChEBI" id="CHEBI:60344"/>
    </ligand>
    <ligandPart>
        <name>Fe</name>
        <dbReference type="ChEBI" id="CHEBI:18248"/>
    </ligandPart>
</feature>
<feature type="binding site" description="proximal binding residue">
    <location>
        <position position="114"/>
    </location>
    <ligand>
        <name>heme b</name>
        <dbReference type="ChEBI" id="CHEBI:60344"/>
    </ligand>
    <ligandPart>
        <name>Fe</name>
        <dbReference type="ChEBI" id="CHEBI:18248"/>
    </ligandPart>
</feature>
<feature type="binding site" description="distal binding residue">
    <location>
        <position position="231"/>
    </location>
    <ligand>
        <name>heme b</name>
        <dbReference type="ChEBI" id="CHEBI:60344"/>
    </ligand>
    <ligandPart>
        <name>Fe</name>
        <dbReference type="ChEBI" id="CHEBI:18248"/>
    </ligandPart>
</feature>
<feature type="binding site" description="proximal binding residue">
    <location>
        <position position="263"/>
    </location>
    <ligand>
        <name>heme b</name>
        <dbReference type="ChEBI" id="CHEBI:60344"/>
    </ligand>
    <ligandPart>
        <name>Fe</name>
        <dbReference type="ChEBI" id="CHEBI:18248"/>
    </ligandPart>
</feature>
<feature type="glycosylation site" description="N-linked (GlcNAc...) asparagine" evidence="3">
    <location>
        <position position="19"/>
    </location>
</feature>
<feature type="glycosylation site" description="N-linked (GlcNAc...) asparagine" evidence="3">
    <location>
        <position position="216"/>
    </location>
</feature>
<feature type="sequence conflict" description="In Ref. 2; AA sequence." evidence="4" ref="2">
    <original>D</original>
    <variation>L</variation>
    <location>
        <position position="117"/>
    </location>
</feature>
<feature type="sequence conflict" description="In Ref. 2; AA sequence." evidence="4" ref="2">
    <location>
        <begin position="169"/>
        <end position="172"/>
    </location>
</feature>
<feature type="sequence conflict" description="In Ref. 2; AA sequence." evidence="4" ref="2">
    <original>L</original>
    <variation>D</variation>
    <location>
        <position position="266"/>
    </location>
</feature>
<feature type="helix" evidence="5">
    <location>
        <begin position="19"/>
        <end position="28"/>
    </location>
</feature>
<feature type="helix" evidence="5">
    <location>
        <begin position="29"/>
        <end position="31"/>
    </location>
</feature>
<feature type="strand" evidence="5">
    <location>
        <begin position="35"/>
        <end position="37"/>
    </location>
</feature>
<feature type="helix" evidence="5">
    <location>
        <begin position="38"/>
        <end position="54"/>
    </location>
</feature>
<feature type="helix" evidence="5">
    <location>
        <begin position="56"/>
        <end position="61"/>
    </location>
</feature>
<feature type="turn" evidence="5">
    <location>
        <begin position="63"/>
        <end position="67"/>
    </location>
</feature>
<feature type="helix" evidence="5">
    <location>
        <begin position="70"/>
        <end position="75"/>
    </location>
</feature>
<feature type="helix" evidence="5">
    <location>
        <begin position="77"/>
        <end position="95"/>
    </location>
</feature>
<feature type="turn" evidence="5">
    <location>
        <begin position="96"/>
        <end position="98"/>
    </location>
</feature>
<feature type="helix" evidence="5">
    <location>
        <begin position="100"/>
        <end position="116"/>
    </location>
</feature>
<feature type="helix" evidence="5">
    <location>
        <begin position="123"/>
        <end position="140"/>
    </location>
</feature>
<feature type="helix" evidence="5">
    <location>
        <begin position="145"/>
        <end position="162"/>
    </location>
</feature>
<keyword id="KW-0002">3D-structure</keyword>
<keyword id="KW-0903">Direct protein sequencing</keyword>
<keyword id="KW-0325">Glycoprotein</keyword>
<keyword id="KW-0349">Heme</keyword>
<keyword id="KW-0408">Iron</keyword>
<keyword id="KW-0479">Metal-binding</keyword>
<keyword id="KW-0561">Oxygen transport</keyword>
<keyword id="KW-0677">Repeat</keyword>
<keyword id="KW-0964">Secreted</keyword>
<keyword id="KW-0732">Signal</keyword>
<keyword id="KW-0813">Transport</keyword>
<comment type="function">
    <text>Has an extremely high oxygen affinity. In a vacuum, it takes several minutes to release its oxygen compared to milliseconds for a normal globin. Could be used as an oxygen scavenger for sterol biosynthesis.</text>
</comment>
<comment type="subunit">
    <text>Homooctamer.</text>
</comment>
<comment type="subcellular location">
    <subcellularLocation>
        <location>Secreted</location>
        <location>Extracellular space</location>
    </subcellularLocation>
</comment>
<comment type="domain">
    <text>Consists of two tandemly linked globin-like sequences which each bind a heme group and a C-terminal extension which may act as a cement between the eight subunits.</text>
</comment>
<comment type="similarity">
    <text evidence="1">Belongs to the globin family.</text>
</comment>
<sequence length="338" mass="40648">MRSLLLLSIVFFVVTVSANKTRELCMKSLEHAKVDTSNEARQDGIDLYKHMFENYPPLRKYFKNREEYTAEDVQNDPFFAKQGQKILLACHVLCATYDDRETFNAYTRELLDRHARDHVHMPPEVWTDFWKLFEEYLGKKTTLDEPTKQAWHEIGREFAKEINKHGRHAVRHQCMRSLQHIDIGHSETAKQNGIDLYKHMFENYPSMREAFKDRENYTAEDVQKDPFFVKQGQRILLACHLLCASYDDEETFHMYVHELMERHERLGVQLPDQHWTDFWKLFEEFLEKKSHLCEHTKHAWAVIGKEFAYEATRHGKEHHEHKEEHKEEHKEEHKEEQH</sequence>
<name>GLB_ASCSU</name>
<protein>
    <recommendedName>
        <fullName>Extracellular globin</fullName>
    </recommendedName>
</protein>
<accession>P28316</accession>
<evidence type="ECO:0000255" key="1">
    <source>
        <dbReference type="PROSITE-ProRule" id="PRU00238"/>
    </source>
</evidence>
<evidence type="ECO:0000256" key="2">
    <source>
        <dbReference type="SAM" id="MobiDB-lite"/>
    </source>
</evidence>
<evidence type="ECO:0000269" key="3">
    <source>
    </source>
</evidence>
<evidence type="ECO:0000305" key="4"/>
<evidence type="ECO:0007829" key="5">
    <source>
        <dbReference type="PDB" id="1ASH"/>
    </source>
</evidence>
<proteinExistence type="evidence at protein level"/>
<organism>
    <name type="scientific">Ascaris suum</name>
    <name type="common">Pig roundworm</name>
    <name type="synonym">Ascaris lumbricoides</name>
    <dbReference type="NCBI Taxonomy" id="6253"/>
    <lineage>
        <taxon>Eukaryota</taxon>
        <taxon>Metazoa</taxon>
        <taxon>Ecdysozoa</taxon>
        <taxon>Nematoda</taxon>
        <taxon>Chromadorea</taxon>
        <taxon>Rhabditida</taxon>
        <taxon>Spirurina</taxon>
        <taxon>Ascaridomorpha</taxon>
        <taxon>Ascaridoidea</taxon>
        <taxon>Ascarididae</taxon>
        <taxon>Ascaris</taxon>
    </lineage>
</organism>